<keyword id="KW-0066">ATP synthesis</keyword>
<keyword id="KW-0997">Cell inner membrane</keyword>
<keyword id="KW-1003">Cell membrane</keyword>
<keyword id="KW-0138">CF(0)</keyword>
<keyword id="KW-0375">Hydrogen ion transport</keyword>
<keyword id="KW-0406">Ion transport</keyword>
<keyword id="KW-0472">Membrane</keyword>
<keyword id="KW-1185">Reference proteome</keyword>
<keyword id="KW-0812">Transmembrane</keyword>
<keyword id="KW-1133">Transmembrane helix</keyword>
<keyword id="KW-0813">Transport</keyword>
<reference key="1">
    <citation type="submission" date="2006-10" db="EMBL/GenBank/DDBJ databases">
        <title>Complete sequence of chromosome of Pelobacter propionicus DSM 2379.</title>
        <authorList>
            <consortium name="US DOE Joint Genome Institute"/>
            <person name="Copeland A."/>
            <person name="Lucas S."/>
            <person name="Lapidus A."/>
            <person name="Barry K."/>
            <person name="Detter J.C."/>
            <person name="Glavina del Rio T."/>
            <person name="Hammon N."/>
            <person name="Israni S."/>
            <person name="Dalin E."/>
            <person name="Tice H."/>
            <person name="Pitluck S."/>
            <person name="Saunders E."/>
            <person name="Brettin T."/>
            <person name="Bruce D."/>
            <person name="Han C."/>
            <person name="Tapia R."/>
            <person name="Schmutz J."/>
            <person name="Larimer F."/>
            <person name="Land M."/>
            <person name="Hauser L."/>
            <person name="Kyrpides N."/>
            <person name="Kim E."/>
            <person name="Lovley D."/>
            <person name="Richardson P."/>
        </authorList>
    </citation>
    <scope>NUCLEOTIDE SEQUENCE [LARGE SCALE GENOMIC DNA]</scope>
    <source>
        <strain>DSM 2379 / NBRC 103807 / OttBd1</strain>
    </source>
</reference>
<proteinExistence type="inferred from homology"/>
<name>ATP61_PELPD</name>
<protein>
    <recommendedName>
        <fullName evidence="1">ATP synthase subunit a 1</fullName>
    </recommendedName>
    <alternativeName>
        <fullName evidence="1">ATP synthase F0 sector subunit a 1</fullName>
    </alternativeName>
    <alternativeName>
        <fullName evidence="1">F-ATPase subunit 6 1</fullName>
    </alternativeName>
</protein>
<evidence type="ECO:0000255" key="1">
    <source>
        <dbReference type="HAMAP-Rule" id="MF_01393"/>
    </source>
</evidence>
<dbReference type="EMBL" id="CP000482">
    <property type="protein sequence ID" value="ABK98230.1"/>
    <property type="molecule type" value="Genomic_DNA"/>
</dbReference>
<dbReference type="RefSeq" id="WP_011734543.1">
    <property type="nucleotide sequence ID" value="NC_008609.1"/>
</dbReference>
<dbReference type="SMR" id="A1ALL0"/>
<dbReference type="STRING" id="338966.Ppro_0599"/>
<dbReference type="KEGG" id="ppd:Ppro_0599"/>
<dbReference type="eggNOG" id="COG0356">
    <property type="taxonomic scope" value="Bacteria"/>
</dbReference>
<dbReference type="HOGENOM" id="CLU_041018_2_2_7"/>
<dbReference type="OrthoDB" id="9789241at2"/>
<dbReference type="Proteomes" id="UP000006732">
    <property type="component" value="Chromosome"/>
</dbReference>
<dbReference type="GO" id="GO:0005886">
    <property type="term" value="C:plasma membrane"/>
    <property type="evidence" value="ECO:0007669"/>
    <property type="project" value="UniProtKB-SubCell"/>
</dbReference>
<dbReference type="GO" id="GO:0045259">
    <property type="term" value="C:proton-transporting ATP synthase complex"/>
    <property type="evidence" value="ECO:0007669"/>
    <property type="project" value="UniProtKB-KW"/>
</dbReference>
<dbReference type="GO" id="GO:0046933">
    <property type="term" value="F:proton-transporting ATP synthase activity, rotational mechanism"/>
    <property type="evidence" value="ECO:0007669"/>
    <property type="project" value="UniProtKB-UniRule"/>
</dbReference>
<dbReference type="GO" id="GO:0042777">
    <property type="term" value="P:proton motive force-driven plasma membrane ATP synthesis"/>
    <property type="evidence" value="ECO:0007669"/>
    <property type="project" value="TreeGrafter"/>
</dbReference>
<dbReference type="CDD" id="cd00310">
    <property type="entry name" value="ATP-synt_Fo_a_6"/>
    <property type="match status" value="1"/>
</dbReference>
<dbReference type="FunFam" id="1.20.120.220:FF:000006">
    <property type="entry name" value="ATP synthase subunit a"/>
    <property type="match status" value="1"/>
</dbReference>
<dbReference type="Gene3D" id="1.20.120.220">
    <property type="entry name" value="ATP synthase, F0 complex, subunit A"/>
    <property type="match status" value="1"/>
</dbReference>
<dbReference type="HAMAP" id="MF_01393">
    <property type="entry name" value="ATP_synth_a_bact"/>
    <property type="match status" value="1"/>
</dbReference>
<dbReference type="InterPro" id="IPR045082">
    <property type="entry name" value="ATP_syn_F0_a_bact/chloroplast"/>
</dbReference>
<dbReference type="InterPro" id="IPR000568">
    <property type="entry name" value="ATP_synth_F0_asu"/>
</dbReference>
<dbReference type="InterPro" id="IPR023011">
    <property type="entry name" value="ATP_synth_F0_asu_AS"/>
</dbReference>
<dbReference type="InterPro" id="IPR035908">
    <property type="entry name" value="F0_ATP_A_sf"/>
</dbReference>
<dbReference type="NCBIfam" id="TIGR01131">
    <property type="entry name" value="ATP_synt_6_or_A"/>
    <property type="match status" value="1"/>
</dbReference>
<dbReference type="PANTHER" id="PTHR42823">
    <property type="entry name" value="ATP SYNTHASE SUBUNIT A, CHLOROPLASTIC"/>
    <property type="match status" value="1"/>
</dbReference>
<dbReference type="PANTHER" id="PTHR42823:SF3">
    <property type="entry name" value="ATP SYNTHASE SUBUNIT A, CHLOROPLASTIC"/>
    <property type="match status" value="1"/>
</dbReference>
<dbReference type="Pfam" id="PF00119">
    <property type="entry name" value="ATP-synt_A"/>
    <property type="match status" value="1"/>
</dbReference>
<dbReference type="PRINTS" id="PR00123">
    <property type="entry name" value="ATPASEA"/>
</dbReference>
<dbReference type="SUPFAM" id="SSF81336">
    <property type="entry name" value="F1F0 ATP synthase subunit A"/>
    <property type="match status" value="1"/>
</dbReference>
<dbReference type="PROSITE" id="PS00449">
    <property type="entry name" value="ATPASE_A"/>
    <property type="match status" value="1"/>
</dbReference>
<organism>
    <name type="scientific">Pelobacter propionicus (strain DSM 2379 / NBRC 103807 / OttBd1)</name>
    <dbReference type="NCBI Taxonomy" id="338966"/>
    <lineage>
        <taxon>Bacteria</taxon>
        <taxon>Pseudomonadati</taxon>
        <taxon>Thermodesulfobacteriota</taxon>
        <taxon>Desulfuromonadia</taxon>
        <taxon>Desulfuromonadales</taxon>
        <taxon>Desulfuromonadaceae</taxon>
        <taxon>Pelobacter</taxon>
    </lineage>
</organism>
<gene>
    <name evidence="1" type="primary">atpB1</name>
    <name type="ordered locus">Ppro_0599</name>
</gene>
<comment type="function">
    <text evidence="1">Key component of the proton channel; it plays a direct role in the translocation of protons across the membrane.</text>
</comment>
<comment type="subunit">
    <text evidence="1">F-type ATPases have 2 components, CF(1) - the catalytic core - and CF(0) - the membrane proton channel. CF(1) has five subunits: alpha(3), beta(3), gamma(1), delta(1), epsilon(1). CF(0) has three main subunits: a(1), b(2) and c(9-12). The alpha and beta chains form an alternating ring which encloses part of the gamma chain. CF(1) is attached to CF(0) by a central stalk formed by the gamma and epsilon chains, while a peripheral stalk is formed by the delta and b chains.</text>
</comment>
<comment type="subcellular location">
    <subcellularLocation>
        <location evidence="1">Cell inner membrane</location>
        <topology evidence="1">Multi-pass membrane protein</topology>
    </subcellularLocation>
</comment>
<comment type="similarity">
    <text evidence="1">Belongs to the ATPase A chain family.</text>
</comment>
<sequence length="229" mass="25402">MVHPLLFLEFFRKLLEPLHMSEAGADAVAYTWLIMLLLLLFSFLATRALKMIPCGLQNFMEVVVGGVENMIVETMGEHGRPYFPLVATVGLFVLVSNLIGLIPGFFPPTANINTTAACAIVVFIATHVVGIKRHGIGYIKHFCGPILWLAPVMFFIEVIGHLSRPLSLTLRLFGNMNGHELVLIIFFGLAPFLVPLPMMLMGVLVSFIQAFVFMLLTMIYIQGSLEEAH</sequence>
<accession>A1ALL0</accession>
<feature type="chain" id="PRO_0000362367" description="ATP synthase subunit a 1">
    <location>
        <begin position="1"/>
        <end position="229"/>
    </location>
</feature>
<feature type="transmembrane region" description="Helical" evidence="1">
    <location>
        <begin position="25"/>
        <end position="45"/>
    </location>
</feature>
<feature type="transmembrane region" description="Helical" evidence="1">
    <location>
        <begin position="86"/>
        <end position="106"/>
    </location>
</feature>
<feature type="transmembrane region" description="Helical" evidence="1">
    <location>
        <begin position="111"/>
        <end position="131"/>
    </location>
</feature>
<feature type="transmembrane region" description="Helical" evidence="1">
    <location>
        <begin position="142"/>
        <end position="162"/>
    </location>
</feature>
<feature type="transmembrane region" description="Helical" evidence="1">
    <location>
        <begin position="181"/>
        <end position="201"/>
    </location>
</feature>
<feature type="transmembrane region" description="Helical" evidence="1">
    <location>
        <begin position="202"/>
        <end position="222"/>
    </location>
</feature>